<comment type="function">
    <text evidence="3">Neuronal protein that plays several roles in synaptic activity such as regulation of synaptic vesicle trafficking and subsequent neurotransmitter release (By similarity). Participates as a monomer in synaptic vesicle exocytosis by enhancing vesicle priming, fusion and dilation of exocytotic fusion pores (By similarity). Mechanistically, acts by increasing local Ca(2+) release from microdomains which is essential for the enhancement of ATP-induced exocytosis (By similarity). Also acts as a molecular chaperone in its multimeric membrane-bound state, assisting in the folding of synaptic fusion components called SNAREs (Soluble NSF Attachment Protein REceptors) at presynaptic plasma membrane in conjunction with cysteine string protein-alpha/DNAJC5 (By similarity). This chaperone activity is important to sustain normal SNARE-complex assembly during aging (By similarity). Also plays a role in the regulation of the dopamine neurotransmission by associating with the dopamine transporter (DAT1) and thereby modulating its activity (By similarity).</text>
</comment>
<comment type="subunit">
    <text evidence="2 3 5">Soluble monomer. Homotetramer. A dynamic intracellular population of tetramers and monomers coexists normally and the tetramer plays an essential role in maintaining homeostasis (By similarity). Interacts with UCHL1 (PubMed:12408865). Interacts with phospholipase D and histones. Interacts (via N-terminus) with synphilin-1/SNCAIP; this interaction promotes formation of SNCA inclusions in the cytoplasm. Interacts with CALM1. Interacts with STXBP1; this interaction controls SNCA self-replicating aggregation. Interacts with SNARE components VAMP2 and SNAP25; these interactions allows SNARE complex assembly and integrity (By similarity). Interacts with RPH3A and RAB3A (By similarity). Interacts with SERF1A; this interaction promotes the aggregation of SNCA (By similarity). Interacts with SEPTIN4 (By similarity). Interacts with DDX10; this interaction causes DDX10 mislocalization to the nucleoplasm and cytoplasmic inclusions (By similarity).</text>
</comment>
<comment type="subcellular location">
    <subcellularLocation>
        <location evidence="3">Cytoplasm</location>
    </subcellularLocation>
    <subcellularLocation>
        <location evidence="3">Membrane</location>
    </subcellularLocation>
    <subcellularLocation>
        <location evidence="3">Nucleus</location>
    </subcellularLocation>
    <subcellularLocation>
        <location evidence="3">Synapse</location>
    </subcellularLocation>
    <subcellularLocation>
        <location evidence="3">Secreted</location>
    </subcellularLocation>
    <subcellularLocation>
        <location evidence="2">Cell projection</location>
        <location evidence="2">Axon</location>
    </subcellularLocation>
    <text evidence="2 3">Membrane-bound in dopaminergic neurons (By similarity). Expressed and colocalized with SEPTIN4 in dopaminergic axon terminals, especially at the varicosities (By similarity).</text>
</comment>
<comment type="alternative products">
    <event type="alternative splicing"/>
    <isoform>
        <id>P37377-1</id>
        <name>Syn1</name>
        <sequence type="displayed"/>
    </isoform>
    <isoform>
        <id>P37377-2</id>
        <name>Syn2</name>
        <sequence type="described" ref="VSP_006367"/>
    </isoform>
    <isoform>
        <id>P37377-3</id>
        <name>Syn3</name>
        <sequence type="described" ref="VSP_006365 VSP_006366"/>
    </isoform>
    <text>Additional isoforms seem to exist.</text>
</comment>
<comment type="tissue specificity">
    <text evidence="6">Found only in brain (hippocampus, brainstem and cortex). Specifically expressed in neuronal cell bodies and synapses.</text>
</comment>
<comment type="PTM">
    <text evidence="3">Phosphorylated, predominantly on serine residues. Phosphorylated on Tyr-125 upon osmotic stress.</text>
</comment>
<comment type="PTM">
    <text evidence="5">Ubiquitinated. The predominant conjugate is the diubiquitinated form.</text>
</comment>
<comment type="PTM">
    <text evidence="3">Acetylation at Met-1 seems to be important for proper folding and native oligomeric structure.</text>
</comment>
<comment type="similarity">
    <text evidence="8">Belongs to the synuclein family.</text>
</comment>
<protein>
    <recommendedName>
        <fullName>Alpha-synuclein</fullName>
    </recommendedName>
</protein>
<organism>
    <name type="scientific">Rattus norvegicus</name>
    <name type="common">Rat</name>
    <dbReference type="NCBI Taxonomy" id="10116"/>
    <lineage>
        <taxon>Eukaryota</taxon>
        <taxon>Metazoa</taxon>
        <taxon>Chordata</taxon>
        <taxon>Craniata</taxon>
        <taxon>Vertebrata</taxon>
        <taxon>Euteleostomi</taxon>
        <taxon>Mammalia</taxon>
        <taxon>Eutheria</taxon>
        <taxon>Euarchontoglires</taxon>
        <taxon>Glires</taxon>
        <taxon>Rodentia</taxon>
        <taxon>Myomorpha</taxon>
        <taxon>Muroidea</taxon>
        <taxon>Muridae</taxon>
        <taxon>Murinae</taxon>
        <taxon>Rattus</taxon>
    </lineage>
</organism>
<feature type="chain" id="PRO_0000184031" description="Alpha-synuclein">
    <location>
        <begin position="1"/>
        <end position="140"/>
    </location>
</feature>
<feature type="repeat" description="1">
    <location>
        <begin position="20"/>
        <end position="30"/>
    </location>
</feature>
<feature type="repeat" description="2">
    <location>
        <begin position="31"/>
        <end position="41"/>
    </location>
</feature>
<feature type="repeat" description="3; approximate">
    <location>
        <begin position="42"/>
        <end position="56"/>
    </location>
</feature>
<feature type="repeat" description="4">
    <location>
        <begin position="57"/>
        <end position="67"/>
    </location>
</feature>
<feature type="region of interest" description="4 X 11 AA tandem repeats of [EGS]-K-T-K-[EQ]-[GQ]-V-X(4)">
    <location>
        <begin position="20"/>
        <end position="67"/>
    </location>
</feature>
<feature type="region of interest" description="Disordered" evidence="4">
    <location>
        <begin position="99"/>
        <end position="140"/>
    </location>
</feature>
<feature type="region of interest" description="Interaction with SERF1A" evidence="3">
    <location>
        <begin position="111"/>
        <end position="140"/>
    </location>
</feature>
<feature type="compositionally biased region" description="Acidic residues" evidence="4">
    <location>
        <begin position="128"/>
        <end position="140"/>
    </location>
</feature>
<feature type="binding site" evidence="1">
    <location>
        <position position="2"/>
    </location>
    <ligand>
        <name>Cu cation</name>
        <dbReference type="ChEBI" id="CHEBI:23378"/>
    </ligand>
</feature>
<feature type="binding site" evidence="1">
    <location>
        <position position="50"/>
    </location>
    <ligand>
        <name>Cu cation</name>
        <dbReference type="ChEBI" id="CHEBI:23378"/>
    </ligand>
</feature>
<feature type="modified residue" description="N-acetylmethionine" evidence="3">
    <location>
        <position position="1"/>
    </location>
</feature>
<feature type="modified residue" description="Phosphotyrosine; by FYN" evidence="3">
    <location>
        <position position="125"/>
    </location>
</feature>
<feature type="modified residue" description="Phosphoserine; by PLK2" evidence="3">
    <location>
        <position position="129"/>
    </location>
</feature>
<feature type="splice variant" id="VSP_006365" description="In isoform Syn3." evidence="8">
    <original>S</original>
    <variation>R</variation>
    <location>
        <position position="42"/>
    </location>
</feature>
<feature type="splice variant" id="VSP_006366" description="In isoform Syn3." evidence="8">
    <location>
        <begin position="43"/>
        <end position="140"/>
    </location>
</feature>
<feature type="splice variant" id="VSP_006367" description="In isoform Syn2." evidence="7">
    <original>EEGYPQEGILEDMPVDPSSEAYEMPSEEGYQDYEPEA</original>
    <variation>YPMGECTNHPPRLIALRVKSRYREHSWRPRKQLSLACVVMDPFLPT</variation>
    <location>
        <begin position="104"/>
        <end position="140"/>
    </location>
</feature>
<proteinExistence type="evidence at protein level"/>
<name>SYUA_RAT</name>
<gene>
    <name type="primary">Snca</name>
</gene>
<reference key="1">
    <citation type="journal article" date="1991" name="Brain Res. Mol. Brain Res.">
        <title>The rat brain synucleins; family of proteins transiently associated with neuronal membrane.</title>
        <authorList>
            <person name="Maroteaux L."/>
            <person name="Scheller R.H."/>
        </authorList>
    </citation>
    <scope>NUCLEOTIDE SEQUENCE [MRNA]</scope>
    <scope>ALTERNATIVE SPLICING</scope>
    <source>
        <tissue>Brain</tissue>
    </source>
</reference>
<reference key="2">
    <citation type="journal article" date="1988" name="J. Neurosci.">
        <title>Synuclein: a neuron-specific protein localized to the nucleus and presynaptic nerve terminal.</title>
        <authorList>
            <person name="Maroteaux L."/>
            <person name="Campanelli J.T."/>
            <person name="Scheller R.H."/>
        </authorList>
    </citation>
    <scope>NUCLEOTIDE SEQUENCE [MRNA] (ISOFORM SYN2)</scope>
    <scope>TISSUE SPECIFICITY</scope>
</reference>
<reference key="3">
    <citation type="journal article" date="1999" name="J. Neurochem.">
        <title>Increased expression of rat synuclein in the substantia nigra pars compacta identified by mRNA differential display in a model of developmental target injury.</title>
        <authorList>
            <person name="Kholodilov N.G."/>
            <person name="Neystat M."/>
            <person name="Oo T.F."/>
            <person name="Lo S.E."/>
            <person name="Larsen K.E."/>
            <person name="Sulzer D."/>
            <person name="Burke R.E."/>
        </authorList>
    </citation>
    <scope>NUCLEOTIDE SEQUENCE [MRNA] (ISOFORM SYN1)</scope>
</reference>
<reference key="4">
    <citation type="journal article" date="2003" name="Proc. Natl. Acad. Sci. U.S.A.">
        <title>Alpha-synuclein maps to a quantitative trait locus for alcohol preference and is differentially expressed in alcohol-preferring and - nonpreferring rats.</title>
        <authorList>
            <person name="Liang T."/>
            <person name="Spence J."/>
            <person name="Liu L."/>
            <person name="Strother W.N."/>
            <person name="Chang H.W."/>
            <person name="Ellison J.A."/>
            <person name="Lumeng L."/>
            <person name="Li T.K."/>
            <person name="Foroud T."/>
            <person name="Carr L.G."/>
        </authorList>
    </citation>
    <scope>NUCLEOTIDE SEQUENCE [MRNA] (ISOFORM SYN1)</scope>
    <source>
        <strain>Wistar</strain>
        <tissue>Brain</tissue>
    </source>
</reference>
<reference key="5">
    <citation type="journal article" date="2004" name="Genome Res.">
        <title>The status, quality, and expansion of the NIH full-length cDNA project: the Mammalian Gene Collection (MGC).</title>
        <authorList>
            <consortium name="The MGC Project Team"/>
        </authorList>
    </citation>
    <scope>NUCLEOTIDE SEQUENCE [LARGE SCALE MRNA] (ISOFORM SYN1)</scope>
    <source>
        <tissue>Brain</tissue>
    </source>
</reference>
<reference key="6">
    <citation type="submission" date="2007-04" db="UniProtKB">
        <authorList>
            <person name="Lubec G."/>
            <person name="Chen W.-Q."/>
        </authorList>
    </citation>
    <scope>PROTEIN SEQUENCE OF 33-97</scope>
    <scope>IDENTIFICATION BY MASS SPECTROMETRY</scope>
    <source>
        <strain>Sprague-Dawley</strain>
        <tissue>Hippocampus</tissue>
    </source>
</reference>
<reference key="7">
    <citation type="journal article" date="2002" name="Cell">
        <title>The UCH-L1 gene encodes two opposing enzymatic activities that affect alpha-synuclein degradation and Parkinson's disease susceptibility.</title>
        <authorList>
            <person name="Liu Y."/>
            <person name="Fallon L."/>
            <person name="Lashuel H.A."/>
            <person name="Liu Z."/>
            <person name="Lansbury P.T. Jr."/>
        </authorList>
    </citation>
    <scope>UBIQUITINATION</scope>
    <scope>INTERACTION WITH UCHL1</scope>
</reference>
<reference key="8">
    <citation type="journal article" date="2012" name="Nat. Commun.">
        <title>Quantitative maps of protein phosphorylation sites across 14 different rat organs and tissues.</title>
        <authorList>
            <person name="Lundby A."/>
            <person name="Secher A."/>
            <person name="Lage K."/>
            <person name="Nordsborg N.B."/>
            <person name="Dmytriyev A."/>
            <person name="Lundby C."/>
            <person name="Olsen J.V."/>
        </authorList>
    </citation>
    <scope>IDENTIFICATION BY MASS SPECTROMETRY [LARGE SCALE ANALYSIS]</scope>
</reference>
<evidence type="ECO:0000250" key="1"/>
<evidence type="ECO:0000250" key="2">
    <source>
        <dbReference type="UniProtKB" id="O55042"/>
    </source>
</evidence>
<evidence type="ECO:0000250" key="3">
    <source>
        <dbReference type="UniProtKB" id="P37840"/>
    </source>
</evidence>
<evidence type="ECO:0000256" key="4">
    <source>
        <dbReference type="SAM" id="MobiDB-lite"/>
    </source>
</evidence>
<evidence type="ECO:0000269" key="5">
    <source>
    </source>
</evidence>
<evidence type="ECO:0000269" key="6">
    <source>
    </source>
</evidence>
<evidence type="ECO:0000303" key="7">
    <source>
    </source>
</evidence>
<evidence type="ECO:0000305" key="8"/>
<accession>P37377</accession>
<accession>P37378</accession>
<accession>Q53YM9</accession>
<keyword id="KW-0007">Acetylation</keyword>
<keyword id="KW-0025">Alternative splicing</keyword>
<keyword id="KW-0966">Cell projection</keyword>
<keyword id="KW-0186">Copper</keyword>
<keyword id="KW-0963">Cytoplasm</keyword>
<keyword id="KW-0903">Direct protein sequencing</keyword>
<keyword id="KW-0472">Membrane</keyword>
<keyword id="KW-0479">Metal-binding</keyword>
<keyword id="KW-0539">Nucleus</keyword>
<keyword id="KW-0597">Phosphoprotein</keyword>
<keyword id="KW-1185">Reference proteome</keyword>
<keyword id="KW-0677">Repeat</keyword>
<keyword id="KW-0964">Secreted</keyword>
<keyword id="KW-0770">Synapse</keyword>
<keyword id="KW-0832">Ubl conjugation</keyword>
<sequence length="140" mass="14515">MDVFMKGLSKAKEGVVAAAEKTKQGVAEAAGKTKEGVLYVGSKTKEGVVHGVTTVAEKTKEQVTNVGGAVVTGVTAVAQKTVEGAGNIAAATGFVKKDQMGKGEEGYPQEGILEDMPVDPSSEAYEMPSEEGYQDYEPEA</sequence>
<dbReference type="EMBL" id="S73007">
    <property type="protein sequence ID" value="AAB20688.1"/>
    <property type="molecule type" value="mRNA"/>
</dbReference>
<dbReference type="EMBL" id="S73008">
    <property type="protein sequence ID" value="AAB20689.1"/>
    <property type="molecule type" value="mRNA"/>
</dbReference>
<dbReference type="EMBL" id="S73009">
    <property type="protein sequence ID" value="AAB20690.1"/>
    <property type="molecule type" value="mRNA"/>
</dbReference>
<dbReference type="EMBL" id="AF007758">
    <property type="protein sequence ID" value="AAC16026.1"/>
    <property type="molecule type" value="mRNA"/>
</dbReference>
<dbReference type="EMBL" id="AY550005">
    <property type="protein sequence ID" value="AAS55694.1"/>
    <property type="molecule type" value="mRNA"/>
</dbReference>
<dbReference type="EMBL" id="AY550006">
    <property type="protein sequence ID" value="AAS55695.1"/>
    <property type="molecule type" value="mRNA"/>
</dbReference>
<dbReference type="EMBL" id="BC087682">
    <property type="protein sequence ID" value="AAH87682.1"/>
    <property type="molecule type" value="mRNA"/>
</dbReference>
<dbReference type="PIR" id="B43959">
    <property type="entry name" value="B43959"/>
</dbReference>
<dbReference type="RefSeq" id="NP_062042.1">
    <molecule id="P37377-1"/>
    <property type="nucleotide sequence ID" value="NM_019169.3"/>
</dbReference>
<dbReference type="RefSeq" id="XP_006236653.1">
    <molecule id="P37377-2"/>
    <property type="nucleotide sequence ID" value="XM_006236591.5"/>
</dbReference>
<dbReference type="RefSeq" id="XP_017447989.1">
    <molecule id="P37377-2"/>
    <property type="nucleotide sequence ID" value="XM_017592500.2"/>
</dbReference>
<dbReference type="RefSeq" id="XP_063141748.1">
    <molecule id="P37377-1"/>
    <property type="nucleotide sequence ID" value="XM_063285678.1"/>
</dbReference>
<dbReference type="BMRB" id="P37377"/>
<dbReference type="BioGRID" id="247897">
    <property type="interactions" value="83"/>
</dbReference>
<dbReference type="FunCoup" id="P37377">
    <property type="interactions" value="422"/>
</dbReference>
<dbReference type="IntAct" id="P37377">
    <property type="interactions" value="3"/>
</dbReference>
<dbReference type="STRING" id="10116.ENSRNOP00000030609"/>
<dbReference type="GlyGen" id="P37377">
    <property type="glycosylation" value="1 site, 1 O-linked glycan (1 site)"/>
</dbReference>
<dbReference type="iPTMnet" id="P37377"/>
<dbReference type="PhosphoSitePlus" id="P37377"/>
<dbReference type="PaxDb" id="10116-ENSRNOP00000040281"/>
<dbReference type="PeptideAtlas" id="P37377"/>
<dbReference type="ABCD" id="P37377">
    <property type="antibodies" value="1 sequenced antibody"/>
</dbReference>
<dbReference type="Ensembl" id="ENSRNOT00000039247.5">
    <molecule id="P37377-1"/>
    <property type="protein sequence ID" value="ENSRNOP00000030609.2"/>
    <property type="gene ID" value="ENSRNOG00000008656.9"/>
</dbReference>
<dbReference type="Ensembl" id="ENSRNOT00000110072.1">
    <molecule id="P37377-2"/>
    <property type="protein sequence ID" value="ENSRNOP00000081453.1"/>
    <property type="gene ID" value="ENSRNOG00000008656.9"/>
</dbReference>
<dbReference type="GeneID" id="29219"/>
<dbReference type="KEGG" id="rno:29219"/>
<dbReference type="UCSC" id="RGD:3729">
    <molecule id="P37377-1"/>
    <property type="organism name" value="rat"/>
</dbReference>
<dbReference type="AGR" id="RGD:3729"/>
<dbReference type="CTD" id="6622"/>
<dbReference type="RGD" id="3729">
    <property type="gene designation" value="Snca"/>
</dbReference>
<dbReference type="GeneTree" id="ENSGT00950000183175"/>
<dbReference type="HOGENOM" id="CLU_129378_1_0_1"/>
<dbReference type="InParanoid" id="P37377"/>
<dbReference type="OMA" id="LPQEGMM"/>
<dbReference type="PhylomeDB" id="P37377"/>
<dbReference type="TreeFam" id="TF332776"/>
<dbReference type="Reactome" id="R-RNO-9833482">
    <property type="pathway name" value="PKR-mediated signaling"/>
</dbReference>
<dbReference type="PRO" id="PR:P37377"/>
<dbReference type="Proteomes" id="UP000002494">
    <property type="component" value="Chromosome 4"/>
</dbReference>
<dbReference type="Bgee" id="ENSRNOG00000008656">
    <property type="expression patterns" value="Expressed in frontal cortex and 18 other cell types or tissues"/>
</dbReference>
<dbReference type="GO" id="GO:0015629">
    <property type="term" value="C:actin cytoskeleton"/>
    <property type="evidence" value="ECO:0000266"/>
    <property type="project" value="RGD"/>
</dbReference>
<dbReference type="GO" id="GO:0030424">
    <property type="term" value="C:axon"/>
    <property type="evidence" value="ECO:0000266"/>
    <property type="project" value="RGD"/>
</dbReference>
<dbReference type="GO" id="GO:0043679">
    <property type="term" value="C:axon terminus"/>
    <property type="evidence" value="ECO:0000314"/>
    <property type="project" value="RGD"/>
</dbReference>
<dbReference type="GO" id="GO:0005938">
    <property type="term" value="C:cell cortex"/>
    <property type="evidence" value="ECO:0000266"/>
    <property type="project" value="RGD"/>
</dbReference>
<dbReference type="GO" id="GO:0005737">
    <property type="term" value="C:cytoplasm"/>
    <property type="evidence" value="ECO:0000266"/>
    <property type="project" value="RGD"/>
</dbReference>
<dbReference type="GO" id="GO:0030659">
    <property type="term" value="C:cytoplasmic vesicle membrane"/>
    <property type="evidence" value="ECO:0000314"/>
    <property type="project" value="BHF-UCL"/>
</dbReference>
<dbReference type="GO" id="GO:0005856">
    <property type="term" value="C:cytoskeleton"/>
    <property type="evidence" value="ECO:0000266"/>
    <property type="project" value="RGD"/>
</dbReference>
<dbReference type="GO" id="GO:0005829">
    <property type="term" value="C:cytosol"/>
    <property type="evidence" value="ECO:0000266"/>
    <property type="project" value="RGD"/>
</dbReference>
<dbReference type="GO" id="GO:0005576">
    <property type="term" value="C:extracellular region"/>
    <property type="evidence" value="ECO:0000266"/>
    <property type="project" value="RGD"/>
</dbReference>
<dbReference type="GO" id="GO:0005615">
    <property type="term" value="C:extracellular space"/>
    <property type="evidence" value="ECO:0000250"/>
    <property type="project" value="UniProtKB"/>
</dbReference>
<dbReference type="GO" id="GO:0030426">
    <property type="term" value="C:growth cone"/>
    <property type="evidence" value="ECO:0000314"/>
    <property type="project" value="RGD"/>
</dbReference>
<dbReference type="GO" id="GO:0016234">
    <property type="term" value="C:inclusion body"/>
    <property type="evidence" value="ECO:0000266"/>
    <property type="project" value="RGD"/>
</dbReference>
<dbReference type="GO" id="GO:0016020">
    <property type="term" value="C:membrane"/>
    <property type="evidence" value="ECO:0000266"/>
    <property type="project" value="RGD"/>
</dbReference>
<dbReference type="GO" id="GO:0005743">
    <property type="term" value="C:mitochondrial inner membrane"/>
    <property type="evidence" value="ECO:0000314"/>
    <property type="project" value="RGD"/>
</dbReference>
<dbReference type="GO" id="GO:0005759">
    <property type="term" value="C:mitochondrial matrix"/>
    <property type="evidence" value="ECO:0000314"/>
    <property type="project" value="RGD"/>
</dbReference>
<dbReference type="GO" id="GO:0005741">
    <property type="term" value="C:mitochondrial outer membrane"/>
    <property type="evidence" value="ECO:0000314"/>
    <property type="project" value="RGD"/>
</dbReference>
<dbReference type="GO" id="GO:0005739">
    <property type="term" value="C:mitochondrion"/>
    <property type="evidence" value="ECO:0000314"/>
    <property type="project" value="BHF-UCL"/>
</dbReference>
<dbReference type="GO" id="GO:0043025">
    <property type="term" value="C:neuronal cell body"/>
    <property type="evidence" value="ECO:0000314"/>
    <property type="project" value="RGD"/>
</dbReference>
<dbReference type="GO" id="GO:0005640">
    <property type="term" value="C:nuclear outer membrane"/>
    <property type="evidence" value="ECO:0000314"/>
    <property type="project" value="RGD"/>
</dbReference>
<dbReference type="GO" id="GO:0005634">
    <property type="term" value="C:nucleus"/>
    <property type="evidence" value="ECO:0000266"/>
    <property type="project" value="RGD"/>
</dbReference>
<dbReference type="GO" id="GO:0048471">
    <property type="term" value="C:perinuclear region of cytoplasm"/>
    <property type="evidence" value="ECO:0000266"/>
    <property type="project" value="RGD"/>
</dbReference>
<dbReference type="GO" id="GO:0005886">
    <property type="term" value="C:plasma membrane"/>
    <property type="evidence" value="ECO:0000266"/>
    <property type="project" value="RGD"/>
</dbReference>
<dbReference type="GO" id="GO:0031092">
    <property type="term" value="C:platelet alpha granule membrane"/>
    <property type="evidence" value="ECO:0000266"/>
    <property type="project" value="RGD"/>
</dbReference>
<dbReference type="GO" id="GO:0098794">
    <property type="term" value="C:postsynapse"/>
    <property type="evidence" value="ECO:0007669"/>
    <property type="project" value="GOC"/>
</dbReference>
<dbReference type="GO" id="GO:0098793">
    <property type="term" value="C:presynapse"/>
    <property type="evidence" value="ECO:0000314"/>
    <property type="project" value="RGD"/>
</dbReference>
<dbReference type="GO" id="GO:0032991">
    <property type="term" value="C:protein-containing complex"/>
    <property type="evidence" value="ECO:0000266"/>
    <property type="project" value="RGD"/>
</dbReference>
<dbReference type="GO" id="GO:0005840">
    <property type="term" value="C:ribosome"/>
    <property type="evidence" value="ECO:0000314"/>
    <property type="project" value="RGD"/>
</dbReference>
<dbReference type="GO" id="GO:0099512">
    <property type="term" value="C:supramolecular fiber"/>
    <property type="evidence" value="ECO:0000266"/>
    <property type="project" value="RGD"/>
</dbReference>
<dbReference type="GO" id="GO:0045202">
    <property type="term" value="C:synapse"/>
    <property type="evidence" value="ECO:0000266"/>
    <property type="project" value="RGD"/>
</dbReference>
<dbReference type="GO" id="GO:0008021">
    <property type="term" value="C:synaptic vesicle"/>
    <property type="evidence" value="ECO:0000314"/>
    <property type="project" value="RGD"/>
</dbReference>
<dbReference type="GO" id="GO:0030672">
    <property type="term" value="C:synaptic vesicle membrane"/>
    <property type="evidence" value="ECO:0000266"/>
    <property type="project" value="RGD"/>
</dbReference>
<dbReference type="GO" id="GO:0043195">
    <property type="term" value="C:terminal bouton"/>
    <property type="evidence" value="ECO:0000314"/>
    <property type="project" value="RGD"/>
</dbReference>
<dbReference type="GO" id="GO:0003779">
    <property type="term" value="F:actin binding"/>
    <property type="evidence" value="ECO:0000266"/>
    <property type="project" value="RGD"/>
</dbReference>
<dbReference type="GO" id="GO:0043014">
    <property type="term" value="F:alpha-tubulin binding"/>
    <property type="evidence" value="ECO:0000266"/>
    <property type="project" value="RGD"/>
</dbReference>
<dbReference type="GO" id="GO:0050544">
    <property type="term" value="F:arachidonate binding"/>
    <property type="evidence" value="ECO:0000266"/>
    <property type="project" value="RGD"/>
</dbReference>
<dbReference type="GO" id="GO:0048487">
    <property type="term" value="F:beta-tubulin binding"/>
    <property type="evidence" value="ECO:0000314"/>
    <property type="project" value="RGD"/>
</dbReference>
<dbReference type="GO" id="GO:0005509">
    <property type="term" value="F:calcium ion binding"/>
    <property type="evidence" value="ECO:0000266"/>
    <property type="project" value="RGD"/>
</dbReference>
<dbReference type="GO" id="GO:0005507">
    <property type="term" value="F:copper ion binding"/>
    <property type="evidence" value="ECO:0000250"/>
    <property type="project" value="UniProtKB"/>
</dbReference>
<dbReference type="GO" id="GO:1903136">
    <property type="term" value="F:cuprous ion binding"/>
    <property type="evidence" value="ECO:0000266"/>
    <property type="project" value="RGD"/>
</dbReference>
<dbReference type="GO" id="GO:0004869">
    <property type="term" value="F:cysteine-type endopeptidase inhibitor activity"/>
    <property type="evidence" value="ECO:0000266"/>
    <property type="project" value="RGD"/>
</dbReference>
<dbReference type="GO" id="GO:0070840">
    <property type="term" value="F:dynein complex binding"/>
    <property type="evidence" value="ECO:0000266"/>
    <property type="project" value="RGD"/>
</dbReference>
<dbReference type="GO" id="GO:0019899">
    <property type="term" value="F:enzyme binding"/>
    <property type="evidence" value="ECO:0000353"/>
    <property type="project" value="RGD"/>
</dbReference>
<dbReference type="GO" id="GO:0004857">
    <property type="term" value="F:enzyme inhibitor activity"/>
    <property type="evidence" value="ECO:0000266"/>
    <property type="project" value="RGD"/>
</dbReference>
<dbReference type="GO" id="GO:0008198">
    <property type="term" value="F:ferrous iron binding"/>
    <property type="evidence" value="ECO:0000266"/>
    <property type="project" value="RGD"/>
</dbReference>
<dbReference type="GO" id="GO:0042393">
    <property type="term" value="F:histone binding"/>
    <property type="evidence" value="ECO:0000266"/>
    <property type="project" value="RGD"/>
</dbReference>
<dbReference type="GO" id="GO:0030544">
    <property type="term" value="F:Hsp70 protein binding"/>
    <property type="evidence" value="ECO:0000266"/>
    <property type="project" value="RGD"/>
</dbReference>
<dbReference type="GO" id="GO:0042802">
    <property type="term" value="F:identical protein binding"/>
    <property type="evidence" value="ECO:0000250"/>
    <property type="project" value="UniProtKB"/>
</dbReference>
<dbReference type="GO" id="GO:0019894">
    <property type="term" value="F:kinesin binding"/>
    <property type="evidence" value="ECO:0000266"/>
    <property type="project" value="RGD"/>
</dbReference>
<dbReference type="GO" id="GO:0008289">
    <property type="term" value="F:lipid binding"/>
    <property type="evidence" value="ECO:0000266"/>
    <property type="project" value="RGD"/>
</dbReference>
<dbReference type="GO" id="GO:0000287">
    <property type="term" value="F:magnesium ion binding"/>
    <property type="evidence" value="ECO:0000266"/>
    <property type="project" value="RGD"/>
</dbReference>
<dbReference type="GO" id="GO:0008017">
    <property type="term" value="F:microtubule binding"/>
    <property type="evidence" value="ECO:0000314"/>
    <property type="project" value="UniProtKB"/>
</dbReference>
<dbReference type="GO" id="GO:0060090">
    <property type="term" value="F:molecular adaptor activity"/>
    <property type="evidence" value="ECO:0000266"/>
    <property type="project" value="RGD"/>
</dbReference>
<dbReference type="GO" id="GO:0016491">
    <property type="term" value="F:oxidoreductase activity"/>
    <property type="evidence" value="ECO:0000266"/>
    <property type="project" value="RGD"/>
</dbReference>
<dbReference type="GO" id="GO:0043274">
    <property type="term" value="F:phospholipase binding"/>
    <property type="evidence" value="ECO:0000353"/>
    <property type="project" value="RGD"/>
</dbReference>
<dbReference type="GO" id="GO:0005543">
    <property type="term" value="F:phospholipid binding"/>
    <property type="evidence" value="ECO:0000314"/>
    <property type="project" value="RGD"/>
</dbReference>
<dbReference type="GO" id="GO:0051219">
    <property type="term" value="F:phosphoprotein binding"/>
    <property type="evidence" value="ECO:0000266"/>
    <property type="project" value="RGD"/>
</dbReference>
<dbReference type="GO" id="GO:0019904">
    <property type="term" value="F:protein domain specific binding"/>
    <property type="evidence" value="ECO:0000353"/>
    <property type="project" value="RGD"/>
</dbReference>
<dbReference type="GO" id="GO:0000149">
    <property type="term" value="F:SNARE binding"/>
    <property type="evidence" value="ECO:0000266"/>
    <property type="project" value="RGD"/>
</dbReference>
<dbReference type="GO" id="GO:0048156">
    <property type="term" value="F:tau protein binding"/>
    <property type="evidence" value="ECO:0000266"/>
    <property type="project" value="RGD"/>
</dbReference>
<dbReference type="GO" id="GO:0141108">
    <property type="term" value="F:transporter regulator activity"/>
    <property type="evidence" value="ECO:0000266"/>
    <property type="project" value="RGD"/>
</dbReference>
<dbReference type="GO" id="GO:0008270">
    <property type="term" value="F:zinc ion binding"/>
    <property type="evidence" value="ECO:0000266"/>
    <property type="project" value="RGD"/>
</dbReference>
<dbReference type="GO" id="GO:0008344">
    <property type="term" value="P:adult locomotory behavior"/>
    <property type="evidence" value="ECO:0000266"/>
    <property type="project" value="RGD"/>
</dbReference>
<dbReference type="GO" id="GO:1990000">
    <property type="term" value="P:amyloid fibril formation"/>
    <property type="evidence" value="ECO:0000266"/>
    <property type="project" value="RGD"/>
</dbReference>
<dbReference type="GO" id="GO:0048148">
    <property type="term" value="P:behavioral response to cocaine"/>
    <property type="evidence" value="ECO:0000315"/>
    <property type="project" value="RGD"/>
</dbReference>
<dbReference type="GO" id="GO:0071280">
    <property type="term" value="P:cellular response to copper ion"/>
    <property type="evidence" value="ECO:0000266"/>
    <property type="project" value="RGD"/>
</dbReference>
<dbReference type="GO" id="GO:0044344">
    <property type="term" value="P:cellular response to fibroblast growth factor stimulus"/>
    <property type="evidence" value="ECO:0000270"/>
    <property type="project" value="RGD"/>
</dbReference>
<dbReference type="GO" id="GO:0034599">
    <property type="term" value="P:cellular response to oxidative stress"/>
    <property type="evidence" value="ECO:0000266"/>
    <property type="project" value="RGD"/>
</dbReference>
<dbReference type="GO" id="GO:0007268">
    <property type="term" value="P:chemical synaptic transmission"/>
    <property type="evidence" value="ECO:0000266"/>
    <property type="project" value="RGD"/>
</dbReference>
<dbReference type="GO" id="GO:0042416">
    <property type="term" value="P:dopamine biosynthetic process"/>
    <property type="evidence" value="ECO:0000266"/>
    <property type="project" value="RGD"/>
</dbReference>
<dbReference type="GO" id="GO:0042417">
    <property type="term" value="P:dopamine metabolic process"/>
    <property type="evidence" value="ECO:0000266"/>
    <property type="project" value="RGD"/>
</dbReference>
<dbReference type="GO" id="GO:0060079">
    <property type="term" value="P:excitatory postsynaptic potential"/>
    <property type="evidence" value="ECO:0000266"/>
    <property type="project" value="RGD"/>
</dbReference>
<dbReference type="GO" id="GO:0006631">
    <property type="term" value="P:fatty acid metabolic process"/>
    <property type="evidence" value="ECO:0000266"/>
    <property type="project" value="RGD"/>
</dbReference>
<dbReference type="GO" id="GO:0060291">
    <property type="term" value="P:long-term synaptic potentiation"/>
    <property type="evidence" value="ECO:0000266"/>
    <property type="project" value="RGD"/>
</dbReference>
<dbReference type="GO" id="GO:0061024">
    <property type="term" value="P:membrane organization"/>
    <property type="evidence" value="ECO:0000266"/>
    <property type="project" value="RGD"/>
</dbReference>
<dbReference type="GO" id="GO:0001774">
    <property type="term" value="P:microglial cell activation"/>
    <property type="evidence" value="ECO:0000266"/>
    <property type="project" value="RGD"/>
</dbReference>
<dbReference type="GO" id="GO:0042775">
    <property type="term" value="P:mitochondrial ATP synthesis coupled electron transport"/>
    <property type="evidence" value="ECO:0000266"/>
    <property type="project" value="RGD"/>
</dbReference>
<dbReference type="GO" id="GO:0007006">
    <property type="term" value="P:mitochondrial membrane organization"/>
    <property type="evidence" value="ECO:0000266"/>
    <property type="project" value="RGD"/>
</dbReference>
<dbReference type="GO" id="GO:0043066">
    <property type="term" value="P:negative regulation of apoptotic process"/>
    <property type="evidence" value="ECO:0000266"/>
    <property type="project" value="RGD"/>
</dbReference>
<dbReference type="GO" id="GO:1904715">
    <property type="term" value="P:negative regulation of chaperone-mediated autophagy"/>
    <property type="evidence" value="ECO:0000266"/>
    <property type="project" value="RGD"/>
</dbReference>
<dbReference type="GO" id="GO:0045963">
    <property type="term" value="P:negative regulation of dopamine metabolic process"/>
    <property type="evidence" value="ECO:0000315"/>
    <property type="project" value="BHF-UCL"/>
</dbReference>
<dbReference type="GO" id="GO:0051585">
    <property type="term" value="P:negative regulation of dopamine uptake involved in synaptic transmission"/>
    <property type="evidence" value="ECO:0000266"/>
    <property type="project" value="RGD"/>
</dbReference>
<dbReference type="GO" id="GO:0045920">
    <property type="term" value="P:negative regulation of exocytosis"/>
    <property type="evidence" value="ECO:0000266"/>
    <property type="project" value="RGD"/>
</dbReference>
<dbReference type="GO" id="GO:0031115">
    <property type="term" value="P:negative regulation of microtubule polymerization"/>
    <property type="evidence" value="ECO:0000266"/>
    <property type="project" value="RGD"/>
</dbReference>
<dbReference type="GO" id="GO:0043524">
    <property type="term" value="P:negative regulation of neuron apoptotic process"/>
    <property type="evidence" value="ECO:0000315"/>
    <property type="project" value="RGD"/>
</dbReference>
<dbReference type="GO" id="GO:0051622">
    <property type="term" value="P:negative regulation of norepinephrine uptake"/>
    <property type="evidence" value="ECO:0000266"/>
    <property type="project" value="RGD"/>
</dbReference>
<dbReference type="GO" id="GO:0010642">
    <property type="term" value="P:negative regulation of platelet-derived growth factor receptor signaling pathway"/>
    <property type="evidence" value="ECO:0000266"/>
    <property type="project" value="RGD"/>
</dbReference>
<dbReference type="GO" id="GO:0051612">
    <property type="term" value="P:negative regulation of serotonin uptake"/>
    <property type="evidence" value="ECO:0000266"/>
    <property type="project" value="RGD"/>
</dbReference>
<dbReference type="GO" id="GO:0070495">
    <property type="term" value="P:negative regulation of thrombin-activated receptor signaling pathway"/>
    <property type="evidence" value="ECO:0000266"/>
    <property type="project" value="RGD"/>
</dbReference>
<dbReference type="GO" id="GO:0051402">
    <property type="term" value="P:neuron apoptotic process"/>
    <property type="evidence" value="ECO:0000266"/>
    <property type="project" value="RGD"/>
</dbReference>
<dbReference type="GO" id="GO:0007269">
    <property type="term" value="P:neurotransmitter secretion"/>
    <property type="evidence" value="ECO:0000266"/>
    <property type="project" value="RGD"/>
</dbReference>
<dbReference type="GO" id="GO:0006638">
    <property type="term" value="P:neutral lipid metabolic process"/>
    <property type="evidence" value="ECO:0000266"/>
    <property type="project" value="RGD"/>
</dbReference>
<dbReference type="GO" id="GO:0006644">
    <property type="term" value="P:phospholipid metabolic process"/>
    <property type="evidence" value="ECO:0000266"/>
    <property type="project" value="RGD"/>
</dbReference>
<dbReference type="GO" id="GO:0045807">
    <property type="term" value="P:positive regulation of endocytosis"/>
    <property type="evidence" value="ECO:0000266"/>
    <property type="project" value="RGD"/>
</dbReference>
<dbReference type="GO" id="GO:0045921">
    <property type="term" value="P:positive regulation of exocytosis"/>
    <property type="evidence" value="ECO:0000266"/>
    <property type="project" value="RGD"/>
</dbReference>
<dbReference type="GO" id="GO:1903285">
    <property type="term" value="P:positive regulation of hydrogen peroxide catabolic process"/>
    <property type="evidence" value="ECO:0000266"/>
    <property type="project" value="RGD"/>
</dbReference>
<dbReference type="GO" id="GO:0050729">
    <property type="term" value="P:positive regulation of inflammatory response"/>
    <property type="evidence" value="ECO:0000266"/>
    <property type="project" value="RGD"/>
</dbReference>
<dbReference type="GO" id="GO:0060732">
    <property type="term" value="P:positive regulation of inositol phosphate biosynthetic process"/>
    <property type="evidence" value="ECO:0000266"/>
    <property type="project" value="RGD"/>
</dbReference>
<dbReference type="GO" id="GO:0001956">
    <property type="term" value="P:positive regulation of neurotransmitter secretion"/>
    <property type="evidence" value="ECO:0000266"/>
    <property type="project" value="RGD"/>
</dbReference>
<dbReference type="GO" id="GO:1904377">
    <property type="term" value="P:positive regulation of protein localization to cell periphery"/>
    <property type="evidence" value="ECO:0000266"/>
    <property type="project" value="RGD"/>
</dbReference>
<dbReference type="GO" id="GO:0001921">
    <property type="term" value="P:positive regulation of receptor recycling"/>
    <property type="evidence" value="ECO:0000266"/>
    <property type="project" value="RGD"/>
</dbReference>
<dbReference type="GO" id="GO:0051281">
    <property type="term" value="P:positive regulation of release of sequestered calcium ion into cytosol"/>
    <property type="evidence" value="ECO:0000266"/>
    <property type="project" value="RGD"/>
</dbReference>
<dbReference type="GO" id="GO:0035543">
    <property type="term" value="P:positive regulation of SNARE complex assembly"/>
    <property type="evidence" value="ECO:0000266"/>
    <property type="project" value="RGD"/>
</dbReference>
<dbReference type="GO" id="GO:0050806">
    <property type="term" value="P:positive regulation of synaptic transmission"/>
    <property type="evidence" value="ECO:0000266"/>
    <property type="project" value="RGD"/>
</dbReference>
<dbReference type="GO" id="GO:0051259">
    <property type="term" value="P:protein complex oligomerization"/>
    <property type="evidence" value="ECO:0000266"/>
    <property type="project" value="RGD"/>
</dbReference>
<dbReference type="GO" id="GO:0031648">
    <property type="term" value="P:protein destabilization"/>
    <property type="evidence" value="ECO:0000266"/>
    <property type="project" value="RGD"/>
</dbReference>
<dbReference type="GO" id="GO:0051262">
    <property type="term" value="P:protein tetramerization"/>
    <property type="evidence" value="ECO:0000266"/>
    <property type="project" value="RGD"/>
</dbReference>
<dbReference type="GO" id="GO:0031623">
    <property type="term" value="P:receptor internalization"/>
    <property type="evidence" value="ECO:0000266"/>
    <property type="project" value="RGD"/>
</dbReference>
<dbReference type="GO" id="GO:0050812">
    <property type="term" value="P:regulation of acyl-CoA biosynthetic process"/>
    <property type="evidence" value="ECO:0000266"/>
    <property type="project" value="RGD"/>
</dbReference>
<dbReference type="GO" id="GO:0014059">
    <property type="term" value="P:regulation of dopamine secretion"/>
    <property type="evidence" value="ECO:0000266"/>
    <property type="project" value="RGD"/>
</dbReference>
<dbReference type="GO" id="GO:0014048">
    <property type="term" value="P:regulation of glutamate secretion"/>
    <property type="evidence" value="ECO:0000266"/>
    <property type="project" value="RGD"/>
</dbReference>
<dbReference type="GO" id="GO:0040012">
    <property type="term" value="P:regulation of locomotion"/>
    <property type="evidence" value="ECO:0000266"/>
    <property type="project" value="RGD"/>
</dbReference>
<dbReference type="GO" id="GO:0048169">
    <property type="term" value="P:regulation of long-term neuronal synaptic plasticity"/>
    <property type="evidence" value="ECO:0000266"/>
    <property type="project" value="RGD"/>
</dbReference>
<dbReference type="GO" id="GO:0043030">
    <property type="term" value="P:regulation of macrophage activation"/>
    <property type="evidence" value="ECO:0000266"/>
    <property type="project" value="RGD"/>
</dbReference>
<dbReference type="GO" id="GO:0048168">
    <property type="term" value="P:regulation of neuronal synaptic plasticity"/>
    <property type="evidence" value="ECO:0000266"/>
    <property type="project" value="RGD"/>
</dbReference>
<dbReference type="GO" id="GO:0046928">
    <property type="term" value="P:regulation of neurotransmitter secretion"/>
    <property type="evidence" value="ECO:0000266"/>
    <property type="project" value="RGD"/>
</dbReference>
<dbReference type="GO" id="GO:0051621">
    <property type="term" value="P:regulation of norepinephrine uptake"/>
    <property type="evidence" value="ECO:0000266"/>
    <property type="project" value="RGD"/>
</dbReference>
<dbReference type="GO" id="GO:1905606">
    <property type="term" value="P:regulation of presynapse assembly"/>
    <property type="evidence" value="ECO:0000266"/>
    <property type="project" value="RGD"/>
</dbReference>
<dbReference type="GO" id="GO:2000377">
    <property type="term" value="P:regulation of reactive oxygen species metabolic process"/>
    <property type="evidence" value="ECO:0000266"/>
    <property type="project" value="RGD"/>
</dbReference>
<dbReference type="GO" id="GO:0042220">
    <property type="term" value="P:response to cocaine"/>
    <property type="evidence" value="ECO:0000270"/>
    <property type="project" value="RGD"/>
</dbReference>
<dbReference type="GO" id="GO:1904307">
    <property type="term" value="P:response to desipramine"/>
    <property type="evidence" value="ECO:0000270"/>
    <property type="project" value="RGD"/>
</dbReference>
<dbReference type="GO" id="GO:0070555">
    <property type="term" value="P:response to interleukin-1"/>
    <property type="evidence" value="ECO:0000266"/>
    <property type="project" value="RGD"/>
</dbReference>
<dbReference type="GO" id="GO:0010040">
    <property type="term" value="P:response to iron(II) ion"/>
    <property type="evidence" value="ECO:0000266"/>
    <property type="project" value="RGD"/>
</dbReference>
<dbReference type="GO" id="GO:0032496">
    <property type="term" value="P:response to lipopolysaccharide"/>
    <property type="evidence" value="ECO:0000266"/>
    <property type="project" value="RGD"/>
</dbReference>
<dbReference type="GO" id="GO:0032026">
    <property type="term" value="P:response to magnesium ion"/>
    <property type="evidence" value="ECO:0000266"/>
    <property type="project" value="RGD"/>
</dbReference>
<dbReference type="GO" id="GO:0034341">
    <property type="term" value="P:response to type II interferon"/>
    <property type="evidence" value="ECO:0000266"/>
    <property type="project" value="RGD"/>
</dbReference>
<dbReference type="GO" id="GO:0009410">
    <property type="term" value="P:response to xenobiotic stimulus"/>
    <property type="evidence" value="ECO:0000266"/>
    <property type="project" value="RGD"/>
</dbReference>
<dbReference type="GO" id="GO:0035493">
    <property type="term" value="P:SNARE complex assembly"/>
    <property type="evidence" value="ECO:0000266"/>
    <property type="project" value="RGD"/>
</dbReference>
<dbReference type="GO" id="GO:0050808">
    <property type="term" value="P:synapse organization"/>
    <property type="evidence" value="ECO:0000266"/>
    <property type="project" value="RGD"/>
</dbReference>
<dbReference type="GO" id="GO:0001963">
    <property type="term" value="P:synaptic transmission, dopaminergic"/>
    <property type="evidence" value="ECO:0000266"/>
    <property type="project" value="RGD"/>
</dbReference>
<dbReference type="GO" id="GO:0048488">
    <property type="term" value="P:synaptic vesicle endocytosis"/>
    <property type="evidence" value="ECO:0000266"/>
    <property type="project" value="RGD"/>
</dbReference>
<dbReference type="GO" id="GO:0016079">
    <property type="term" value="P:synaptic vesicle exocytosis"/>
    <property type="evidence" value="ECO:0000266"/>
    <property type="project" value="RGD"/>
</dbReference>
<dbReference type="GO" id="GO:0016082">
    <property type="term" value="P:synaptic vesicle priming"/>
    <property type="evidence" value="ECO:0000266"/>
    <property type="project" value="RGD"/>
</dbReference>
<dbReference type="GO" id="GO:0048489">
    <property type="term" value="P:synaptic vesicle transport"/>
    <property type="evidence" value="ECO:0000266"/>
    <property type="project" value="RGD"/>
</dbReference>
<dbReference type="FunFam" id="1.10.287.700:FF:000001">
    <property type="entry name" value="Alpha-synuclein"/>
    <property type="match status" value="1"/>
</dbReference>
<dbReference type="Gene3D" id="1.10.287.700">
    <property type="entry name" value="Helix hairpin bin"/>
    <property type="match status" value="1"/>
</dbReference>
<dbReference type="InterPro" id="IPR001058">
    <property type="entry name" value="Synuclein"/>
</dbReference>
<dbReference type="InterPro" id="IPR002460">
    <property type="entry name" value="Synuclein_alpha"/>
</dbReference>
<dbReference type="PANTHER" id="PTHR13820:SF5">
    <property type="entry name" value="ALPHA-SYNUCLEIN"/>
    <property type="match status" value="1"/>
</dbReference>
<dbReference type="PANTHER" id="PTHR13820">
    <property type="entry name" value="SYNUCLEIN"/>
    <property type="match status" value="1"/>
</dbReference>
<dbReference type="Pfam" id="PF01387">
    <property type="entry name" value="Synuclein"/>
    <property type="match status" value="1"/>
</dbReference>
<dbReference type="PRINTS" id="PR01212">
    <property type="entry name" value="ASYNUCLEIN"/>
</dbReference>
<dbReference type="PRINTS" id="PR01211">
    <property type="entry name" value="SYNUCLEIN"/>
</dbReference>
<dbReference type="SUPFAM" id="SSF118375">
    <property type="entry name" value="Synuclein"/>
    <property type="match status" value="1"/>
</dbReference>